<proteinExistence type="inferred from homology"/>
<reference key="1">
    <citation type="journal article" date="2005" name="Science">
        <title>Genome sequence of Theileria parva, a bovine pathogen that transforms lymphocytes.</title>
        <authorList>
            <person name="Gardner M.J."/>
            <person name="Bishop R."/>
            <person name="Shah T."/>
            <person name="de Villiers E.P."/>
            <person name="Carlton J.M."/>
            <person name="Hall N."/>
            <person name="Ren Q."/>
            <person name="Paulsen I.T."/>
            <person name="Pain A."/>
            <person name="Berriman M."/>
            <person name="Wilson R.J.M."/>
            <person name="Sato S."/>
            <person name="Ralph S.A."/>
            <person name="Mann D.J."/>
            <person name="Xiong Z."/>
            <person name="Shallom S.J."/>
            <person name="Weidman J."/>
            <person name="Jiang L."/>
            <person name="Lynn J."/>
            <person name="Weaver B."/>
            <person name="Shoaibi A."/>
            <person name="Domingo A.R."/>
            <person name="Wasawo D."/>
            <person name="Crabtree J."/>
            <person name="Wortman J.R."/>
            <person name="Haas B."/>
            <person name="Angiuoli S.V."/>
            <person name="Creasy T.H."/>
            <person name="Lu C."/>
            <person name="Suh B."/>
            <person name="Silva J.C."/>
            <person name="Utterback T.R."/>
            <person name="Feldblyum T.V."/>
            <person name="Pertea M."/>
            <person name="Allen J."/>
            <person name="Nierman W.C."/>
            <person name="Taracha E.L.N."/>
            <person name="Salzberg S.L."/>
            <person name="White O.R."/>
            <person name="Fitzhugh H.A."/>
            <person name="Morzaria S."/>
            <person name="Venter J.C."/>
            <person name="Fraser C.M."/>
            <person name="Nene V."/>
        </authorList>
    </citation>
    <scope>NUCLEOTIDE SEQUENCE [LARGE SCALE GENOMIC DNA]</scope>
    <source>
        <strain>Muguga</strain>
    </source>
</reference>
<comment type="subcellular location">
    <subcellularLocation>
        <location evidence="2">Membrane</location>
        <topology evidence="2">Single-pass membrane protein</topology>
    </subcellularLocation>
</comment>
<dbReference type="EMBL" id="AAGK01000002">
    <property type="protein sequence ID" value="EAN32834.1"/>
    <property type="molecule type" value="Genomic_DNA"/>
</dbReference>
<dbReference type="RefSeq" id="XP_765117.1">
    <property type="nucleotide sequence ID" value="XM_760024.1"/>
</dbReference>
<dbReference type="SMR" id="Q4N4T9"/>
<dbReference type="EnsemblProtists" id="EAN32834">
    <property type="protein sequence ID" value="EAN32834"/>
    <property type="gene ID" value="TP02_0551"/>
</dbReference>
<dbReference type="GeneID" id="3502172"/>
<dbReference type="KEGG" id="tpv:TP02_0551"/>
<dbReference type="VEuPathDB" id="PiroplasmaDB:TpMuguga_02g00551"/>
<dbReference type="eggNOG" id="ENOG502QXG2">
    <property type="taxonomic scope" value="Eukaryota"/>
</dbReference>
<dbReference type="InParanoid" id="Q4N4T9"/>
<dbReference type="OMA" id="LIFGQAT"/>
<dbReference type="Proteomes" id="UP000001949">
    <property type="component" value="Unassembled WGS sequence"/>
</dbReference>
<dbReference type="GO" id="GO:0016020">
    <property type="term" value="C:membrane"/>
    <property type="evidence" value="ECO:0007669"/>
    <property type="project" value="UniProtKB-SubCell"/>
</dbReference>
<protein>
    <recommendedName>
        <fullName>23 kDa piroplasm membrane protein</fullName>
    </recommendedName>
    <alternativeName>
        <fullName>p23</fullName>
    </alternativeName>
</protein>
<keyword id="KW-0472">Membrane</keyword>
<keyword id="KW-1185">Reference proteome</keyword>
<keyword id="KW-0732">Signal</keyword>
<keyword id="KW-0812">Transmembrane</keyword>
<keyword id="KW-1133">Transmembrane helix</keyword>
<organism>
    <name type="scientific">Theileria parva</name>
    <name type="common">East coast fever infection agent</name>
    <dbReference type="NCBI Taxonomy" id="5875"/>
    <lineage>
        <taxon>Eukaryota</taxon>
        <taxon>Sar</taxon>
        <taxon>Alveolata</taxon>
        <taxon>Apicomplexa</taxon>
        <taxon>Aconoidasida</taxon>
        <taxon>Piroplasmida</taxon>
        <taxon>Theileriidae</taxon>
        <taxon>Theileria</taxon>
    </lineage>
</organism>
<feature type="signal peptide" evidence="1">
    <location>
        <begin position="1"/>
        <end position="19"/>
    </location>
</feature>
<feature type="chain" id="PRO_0000232717" description="23 kDa piroplasm membrane protein">
    <location>
        <begin position="20"/>
        <end position="229"/>
    </location>
</feature>
<feature type="topological domain" description="Extracellular" evidence="1">
    <location>
        <begin position="20"/>
        <end position="203"/>
    </location>
</feature>
<feature type="transmembrane region" description="Helical" evidence="1">
    <location>
        <begin position="204"/>
        <end position="224"/>
    </location>
</feature>
<feature type="topological domain" description="Cytoplasmic" evidence="1">
    <location>
        <begin position="225"/>
        <end position="229"/>
    </location>
</feature>
<sequence length="229" mass="27074">MNKYFKVFFFVLLTHALKSALIFGQATLQKGLSLDIDKDSKATDRLVVKHFDSDKQGYKAYTFKKEGWEYVNVKHVYFGERLLRVGRDQDMKCDYVHYVKVFWKGELAPFLIKMKYYNWAWVSTRLHFRLTPELTWAEVFVPTIDENSEEGYMKLFKKRMDDFVSQVGEDRLATYKPFTEDPSKKRFDLTPTDEKEDTNKKKYVLMVVVVVVFVVVASLVVFLVKFCLK</sequence>
<evidence type="ECO:0000255" key="1"/>
<evidence type="ECO:0000305" key="2"/>
<name>P23_THEPA</name>
<accession>Q4N4T9</accession>
<gene>
    <name type="ordered locus">TP02_0551</name>
</gene>